<proteinExistence type="inferred from homology"/>
<organism>
    <name type="scientific">Borrelia turicatae (strain 91E135)</name>
    <dbReference type="NCBI Taxonomy" id="314724"/>
    <lineage>
        <taxon>Bacteria</taxon>
        <taxon>Pseudomonadati</taxon>
        <taxon>Spirochaetota</taxon>
        <taxon>Spirochaetia</taxon>
        <taxon>Spirochaetales</taxon>
        <taxon>Borreliaceae</taxon>
        <taxon>Borrelia</taxon>
    </lineage>
</organism>
<feature type="chain" id="PRO_1000195238" description="Crossover junction endodeoxyribonuclease RuvC">
    <location>
        <begin position="1"/>
        <end position="161"/>
    </location>
</feature>
<feature type="active site" evidence="1">
    <location>
        <position position="9"/>
    </location>
</feature>
<feature type="active site" evidence="1">
    <location>
        <position position="69"/>
    </location>
</feature>
<feature type="active site" evidence="1">
    <location>
        <position position="144"/>
    </location>
</feature>
<feature type="binding site" evidence="1">
    <location>
        <position position="9"/>
    </location>
    <ligand>
        <name>Mg(2+)</name>
        <dbReference type="ChEBI" id="CHEBI:18420"/>
        <label>1</label>
    </ligand>
</feature>
<feature type="binding site" evidence="1">
    <location>
        <position position="69"/>
    </location>
    <ligand>
        <name>Mg(2+)</name>
        <dbReference type="ChEBI" id="CHEBI:18420"/>
        <label>2</label>
    </ligand>
</feature>
<feature type="binding site" evidence="1">
    <location>
        <position position="144"/>
    </location>
    <ligand>
        <name>Mg(2+)</name>
        <dbReference type="ChEBI" id="CHEBI:18420"/>
        <label>1</label>
    </ligand>
</feature>
<accession>A1QYH7</accession>
<evidence type="ECO:0000255" key="1">
    <source>
        <dbReference type="HAMAP-Rule" id="MF_00034"/>
    </source>
</evidence>
<dbReference type="EC" id="3.1.21.10" evidence="1"/>
<dbReference type="EMBL" id="CP000049">
    <property type="protein sequence ID" value="AAX17369.1"/>
    <property type="molecule type" value="Genomic_DNA"/>
</dbReference>
<dbReference type="SMR" id="A1QYH7"/>
<dbReference type="KEGG" id="btu:BT0023A"/>
<dbReference type="eggNOG" id="COG0817">
    <property type="taxonomic scope" value="Bacteria"/>
</dbReference>
<dbReference type="HOGENOM" id="CLU_091257_3_2_12"/>
<dbReference type="Proteomes" id="UP000001205">
    <property type="component" value="Chromosome"/>
</dbReference>
<dbReference type="GO" id="GO:0005737">
    <property type="term" value="C:cytoplasm"/>
    <property type="evidence" value="ECO:0007669"/>
    <property type="project" value="UniProtKB-SubCell"/>
</dbReference>
<dbReference type="GO" id="GO:0048476">
    <property type="term" value="C:Holliday junction resolvase complex"/>
    <property type="evidence" value="ECO:0007669"/>
    <property type="project" value="UniProtKB-UniRule"/>
</dbReference>
<dbReference type="GO" id="GO:0008821">
    <property type="term" value="F:crossover junction DNA endonuclease activity"/>
    <property type="evidence" value="ECO:0007669"/>
    <property type="project" value="UniProtKB-UniRule"/>
</dbReference>
<dbReference type="GO" id="GO:0003677">
    <property type="term" value="F:DNA binding"/>
    <property type="evidence" value="ECO:0007669"/>
    <property type="project" value="UniProtKB-KW"/>
</dbReference>
<dbReference type="GO" id="GO:0000287">
    <property type="term" value="F:magnesium ion binding"/>
    <property type="evidence" value="ECO:0007669"/>
    <property type="project" value="UniProtKB-UniRule"/>
</dbReference>
<dbReference type="GO" id="GO:0006310">
    <property type="term" value="P:DNA recombination"/>
    <property type="evidence" value="ECO:0007669"/>
    <property type="project" value="UniProtKB-UniRule"/>
</dbReference>
<dbReference type="GO" id="GO:0006281">
    <property type="term" value="P:DNA repair"/>
    <property type="evidence" value="ECO:0007669"/>
    <property type="project" value="UniProtKB-UniRule"/>
</dbReference>
<dbReference type="CDD" id="cd16962">
    <property type="entry name" value="RuvC"/>
    <property type="match status" value="1"/>
</dbReference>
<dbReference type="FunFam" id="3.30.420.10:FF:000002">
    <property type="entry name" value="Crossover junction endodeoxyribonuclease RuvC"/>
    <property type="match status" value="1"/>
</dbReference>
<dbReference type="Gene3D" id="3.30.420.10">
    <property type="entry name" value="Ribonuclease H-like superfamily/Ribonuclease H"/>
    <property type="match status" value="1"/>
</dbReference>
<dbReference type="HAMAP" id="MF_00034">
    <property type="entry name" value="RuvC"/>
    <property type="match status" value="1"/>
</dbReference>
<dbReference type="InterPro" id="IPR012337">
    <property type="entry name" value="RNaseH-like_sf"/>
</dbReference>
<dbReference type="InterPro" id="IPR036397">
    <property type="entry name" value="RNaseH_sf"/>
</dbReference>
<dbReference type="InterPro" id="IPR002176">
    <property type="entry name" value="X-over_junc_endoDNase_RuvC"/>
</dbReference>
<dbReference type="NCBIfam" id="TIGR00228">
    <property type="entry name" value="ruvC"/>
    <property type="match status" value="1"/>
</dbReference>
<dbReference type="PANTHER" id="PTHR30194">
    <property type="entry name" value="CROSSOVER JUNCTION ENDODEOXYRIBONUCLEASE RUVC"/>
    <property type="match status" value="1"/>
</dbReference>
<dbReference type="PANTHER" id="PTHR30194:SF3">
    <property type="entry name" value="CROSSOVER JUNCTION ENDODEOXYRIBONUCLEASE RUVC"/>
    <property type="match status" value="1"/>
</dbReference>
<dbReference type="Pfam" id="PF02075">
    <property type="entry name" value="RuvC"/>
    <property type="match status" value="1"/>
</dbReference>
<dbReference type="PRINTS" id="PR00696">
    <property type="entry name" value="RSOLVASERUVC"/>
</dbReference>
<dbReference type="SUPFAM" id="SSF53098">
    <property type="entry name" value="Ribonuclease H-like"/>
    <property type="match status" value="1"/>
</dbReference>
<name>RUVC_BORT9</name>
<gene>
    <name evidence="1" type="primary">ruvC</name>
    <name type="ordered locus">BT0023A</name>
</gene>
<reference key="1">
    <citation type="submission" date="2004-12" db="EMBL/GenBank/DDBJ databases">
        <title>The genome sequence of Borrelia hermsii and Borrelia turicatae: comparative analysis of two agents of endemic N. America relapsing fever.</title>
        <authorList>
            <person name="Porcella S.F."/>
            <person name="Raffel S.J."/>
            <person name="Schrumpf M.E."/>
            <person name="Montgomery B."/>
            <person name="Smith T."/>
            <person name="Schwan T.G."/>
        </authorList>
    </citation>
    <scope>NUCLEOTIDE SEQUENCE [LARGE SCALE GENOMIC DNA]</scope>
    <source>
        <strain>91E135</strain>
    </source>
</reference>
<keyword id="KW-0963">Cytoplasm</keyword>
<keyword id="KW-0227">DNA damage</keyword>
<keyword id="KW-0233">DNA recombination</keyword>
<keyword id="KW-0234">DNA repair</keyword>
<keyword id="KW-0238">DNA-binding</keyword>
<keyword id="KW-0255">Endonuclease</keyword>
<keyword id="KW-0378">Hydrolase</keyword>
<keyword id="KW-0460">Magnesium</keyword>
<keyword id="KW-0479">Metal-binding</keyword>
<keyword id="KW-0540">Nuclease</keyword>
<keyword id="KW-1185">Reference proteome</keyword>
<sequence>MIMRILGIDPGLANVGWGILDRKGSKYMYVQDGTVITHPFMSLKDRLKLISDEIILIIDNFKPDVASIENIYFAKNKKTAISVSEARGAIILTFALKNLDFYEYTPIQVKNSISGFGRIEKVQVKYVIRILLGMKPDFIFTSDHSSDALALAICHGNYHIL</sequence>
<comment type="function">
    <text evidence="1">The RuvA-RuvB-RuvC complex processes Holliday junction (HJ) DNA during genetic recombination and DNA repair. Endonuclease that resolves HJ intermediates. Cleaves cruciform DNA by making single-stranded nicks across the HJ at symmetrical positions within the homologous arms, yielding a 5'-phosphate and a 3'-hydroxyl group; requires a central core of homology in the junction. The consensus cleavage sequence is 5'-(A/T)TT(C/G)-3'. Cleavage occurs on the 3'-side of the TT dinucleotide at the point of strand exchange. HJ branch migration catalyzed by RuvA-RuvB allows RuvC to scan DNA until it finds its consensus sequence, where it cleaves and resolves the cruciform DNA.</text>
</comment>
<comment type="catalytic activity">
    <reaction evidence="1">
        <text>Endonucleolytic cleavage at a junction such as a reciprocal single-stranded crossover between two homologous DNA duplexes (Holliday junction).</text>
        <dbReference type="EC" id="3.1.21.10"/>
    </reaction>
</comment>
<comment type="cofactor">
    <cofactor evidence="1">
        <name>Mg(2+)</name>
        <dbReference type="ChEBI" id="CHEBI:18420"/>
    </cofactor>
    <text evidence="1">Binds 2 Mg(2+) ion per subunit.</text>
</comment>
<comment type="subunit">
    <text evidence="1">Homodimer which binds Holliday junction (HJ) DNA. The HJ becomes 2-fold symmetrical on binding to RuvC with unstacked arms; it has a different conformation from HJ DNA in complex with RuvA. In the full resolvosome a probable DNA-RuvA(4)-RuvB(12)-RuvC(2) complex forms which resolves the HJ.</text>
</comment>
<comment type="subcellular location">
    <subcellularLocation>
        <location evidence="1">Cytoplasm</location>
    </subcellularLocation>
</comment>
<comment type="similarity">
    <text evidence="1">Belongs to the RuvC family.</text>
</comment>
<protein>
    <recommendedName>
        <fullName evidence="1">Crossover junction endodeoxyribonuclease RuvC</fullName>
        <ecNumber evidence="1">3.1.21.10</ecNumber>
    </recommendedName>
    <alternativeName>
        <fullName evidence="1">Holliday junction nuclease RuvC</fullName>
    </alternativeName>
    <alternativeName>
        <fullName evidence="1">Holliday junction resolvase RuvC</fullName>
    </alternativeName>
</protein>